<feature type="peptide" id="PRO_0000292939" description="Trypsin inhibitor 3">
    <location>
        <begin position="1"/>
        <end position="37"/>
    </location>
</feature>
<feature type="site" description="Reactive bond for trypsin" evidence="2">
    <location>
        <begin position="32"/>
        <end position="33"/>
    </location>
</feature>
<feature type="disulfide bond" evidence="2">
    <location>
        <begin position="4"/>
        <end position="21"/>
    </location>
</feature>
<feature type="disulfide bond" evidence="2">
    <location>
        <begin position="11"/>
        <end position="25"/>
    </location>
</feature>
<feature type="disulfide bond" evidence="2">
    <location>
        <begin position="20"/>
        <end position="36"/>
    </location>
</feature>
<feature type="strand" evidence="5">
    <location>
        <begin position="9"/>
        <end position="11"/>
    </location>
</feature>
<feature type="helix" evidence="6">
    <location>
        <begin position="17"/>
        <end position="19"/>
    </location>
</feature>
<feature type="strand" evidence="6">
    <location>
        <begin position="25"/>
        <end position="27"/>
    </location>
</feature>
<feature type="strand" evidence="6">
    <location>
        <begin position="29"/>
        <end position="36"/>
    </location>
</feature>
<reference evidence="4" key="1">
    <citation type="journal article" date="2007" name="Phytochemistry">
        <title>Trypsin inhibitors from the garden four o'clock (Mirabilis jalapa) and spinach (Spinacia oleracea) seeds: isolation, characterization and chemical synthesis.</title>
        <authorList>
            <person name="Kowalska J."/>
            <person name="Pszczola K."/>
            <person name="Wilimowska-Pelc A."/>
            <person name="Lorenc-Kubis I."/>
            <person name="Zuziak E."/>
            <person name="Lugowski M."/>
            <person name="Legowska A."/>
            <person name="Kwiatkowska A."/>
            <person name="Sleszynska M."/>
            <person name="Lesner A."/>
            <person name="Walewska A."/>
            <person name="Zablotna E."/>
            <person name="Rolka K."/>
            <person name="Wilusz T."/>
        </authorList>
    </citation>
    <scope>PROTEIN SEQUENCE</scope>
    <scope>FUNCTION</scope>
    <scope>MASS SPECTROMETRY</scope>
    <source>
        <tissue evidence="3">Seed</tissue>
    </source>
</reference>
<keyword id="KW-0002">3D-structure</keyword>
<keyword id="KW-0903">Direct protein sequencing</keyword>
<keyword id="KW-1015">Disulfide bond</keyword>
<keyword id="KW-0960">Knottin</keyword>
<keyword id="KW-0646">Protease inhibitor</keyword>
<keyword id="KW-1185">Reference proteome</keyword>
<keyword id="KW-0722">Serine protease inhibitor</keyword>
<name>ITR3_SPIOL</name>
<comment type="function">
    <text evidence="3">Trypsin inhibitor.</text>
</comment>
<comment type="domain">
    <text evidence="1">The presence of a 'disulfide through disulfide knot' structurally defines this protein as a knottin.</text>
</comment>
<comment type="mass spectrometry"/>
<comment type="similarity">
    <text evidence="3">Belongs to the Mirabilis serine proteinase inhibitor family.</text>
</comment>
<proteinExistence type="evidence at protein level"/>
<sequence>EDKCSPSGAICSGFGPPEQCCSGACVPHPILRIFVCQ</sequence>
<protein>
    <recommendedName>
        <fullName>Trypsin inhibitor 3</fullName>
    </recommendedName>
    <alternativeName>
        <fullName>SOTI III</fullName>
    </alternativeName>
    <alternativeName>
        <fullName>Trypsin inhibitor III</fullName>
    </alternativeName>
</protein>
<evidence type="ECO:0000250" key="1"/>
<evidence type="ECO:0000250" key="2">
    <source>
        <dbReference type="UniProtKB" id="P84779"/>
    </source>
</evidence>
<evidence type="ECO:0000269" key="3">
    <source>
    </source>
</evidence>
<evidence type="ECO:0000305" key="4"/>
<evidence type="ECO:0007829" key="5">
    <source>
        <dbReference type="PDB" id="4AOQ"/>
    </source>
</evidence>
<evidence type="ECO:0007829" key="6">
    <source>
        <dbReference type="PDB" id="4AOR"/>
    </source>
</evidence>
<accession>P84781</accession>
<organism>
    <name type="scientific">Spinacia oleracea</name>
    <name type="common">Spinach</name>
    <dbReference type="NCBI Taxonomy" id="3562"/>
    <lineage>
        <taxon>Eukaryota</taxon>
        <taxon>Viridiplantae</taxon>
        <taxon>Streptophyta</taxon>
        <taxon>Embryophyta</taxon>
        <taxon>Tracheophyta</taxon>
        <taxon>Spermatophyta</taxon>
        <taxon>Magnoliopsida</taxon>
        <taxon>eudicotyledons</taxon>
        <taxon>Gunneridae</taxon>
        <taxon>Pentapetalae</taxon>
        <taxon>Caryophyllales</taxon>
        <taxon>Chenopodiaceae</taxon>
        <taxon>Chenopodioideae</taxon>
        <taxon>Anserineae</taxon>
        <taxon>Spinacia</taxon>
    </lineage>
</organism>
<dbReference type="PDB" id="4AOQ">
    <property type="method" value="X-ray"/>
    <property type="resolution" value="2.00 A"/>
    <property type="chains" value="D/E/F=1-37"/>
</dbReference>
<dbReference type="PDB" id="4AOR">
    <property type="method" value="X-ray"/>
    <property type="resolution" value="1.70 A"/>
    <property type="chains" value="D/E/F=1-37"/>
</dbReference>
<dbReference type="PDBsum" id="4AOQ"/>
<dbReference type="PDBsum" id="4AOR"/>
<dbReference type="SMR" id="P84781"/>
<dbReference type="MEROPS" id="I90.002"/>
<dbReference type="Proteomes" id="UP001155700">
    <property type="component" value="Unplaced"/>
</dbReference>
<dbReference type="GO" id="GO:0004867">
    <property type="term" value="F:serine-type endopeptidase inhibitor activity"/>
    <property type="evidence" value="ECO:0007669"/>
    <property type="project" value="UniProtKB-KW"/>
</dbReference>
<dbReference type="InterPro" id="IPR040875">
    <property type="entry name" value="Tryp_inh"/>
</dbReference>
<dbReference type="Pfam" id="PF17983">
    <property type="entry name" value="Tryp_inh"/>
    <property type="match status" value="1"/>
</dbReference>